<sequence>MNKLIDEITKSQLNPDVPNFRPGDTVRVHAKVVEGTRERIQLFEGVVIKRRGAGISETFTVRKISNSVGVERTFPVHTPRIAKLEVIRRGKVRRAKLYYLRNLRGKAARIKEIR</sequence>
<organism>
    <name type="scientific">Listeria monocytogenes serovar 1/2a (strain ATCC BAA-679 / EGD-e)</name>
    <dbReference type="NCBI Taxonomy" id="169963"/>
    <lineage>
        <taxon>Bacteria</taxon>
        <taxon>Bacillati</taxon>
        <taxon>Bacillota</taxon>
        <taxon>Bacilli</taxon>
        <taxon>Bacillales</taxon>
        <taxon>Listeriaceae</taxon>
        <taxon>Listeria</taxon>
    </lineage>
</organism>
<comment type="function">
    <text evidence="1">This protein is located at the 30S-50S ribosomal subunit interface and may play a role in the structure and function of the aminoacyl-tRNA binding site.</text>
</comment>
<comment type="similarity">
    <text evidence="2">Belongs to the bacterial ribosomal protein bL19 family.</text>
</comment>
<keyword id="KW-0002">3D-structure</keyword>
<keyword id="KW-1185">Reference proteome</keyword>
<keyword id="KW-0687">Ribonucleoprotein</keyword>
<keyword id="KW-0689">Ribosomal protein</keyword>
<proteinExistence type="evidence at protein level"/>
<gene>
    <name type="primary">rplS</name>
    <name type="ordered locus">lmo1787</name>
</gene>
<feature type="chain" id="PRO_0000163479" description="Large ribosomal subunit protein bL19">
    <location>
        <begin position="1"/>
        <end position="114"/>
    </location>
</feature>
<feature type="helix" evidence="3">
    <location>
        <begin position="4"/>
        <end position="9"/>
    </location>
</feature>
<feature type="helix" evidence="3">
    <location>
        <begin position="10"/>
        <end position="12"/>
    </location>
</feature>
<feature type="strand" evidence="3">
    <location>
        <begin position="25"/>
        <end position="34"/>
    </location>
</feature>
<feature type="strand" evidence="3">
    <location>
        <begin position="37"/>
        <end position="51"/>
    </location>
</feature>
<feature type="helix" evidence="3">
    <location>
        <begin position="54"/>
        <end position="56"/>
    </location>
</feature>
<feature type="strand" evidence="3">
    <location>
        <begin position="58"/>
        <end position="65"/>
    </location>
</feature>
<feature type="strand" evidence="3">
    <location>
        <begin position="68"/>
        <end position="75"/>
    </location>
</feature>
<feature type="strand" evidence="3">
    <location>
        <begin position="81"/>
        <end position="88"/>
    </location>
</feature>
<feature type="strand" evidence="3">
    <location>
        <begin position="93"/>
        <end position="95"/>
    </location>
</feature>
<feature type="helix" evidence="3">
    <location>
        <begin position="98"/>
        <end position="101"/>
    </location>
</feature>
<feature type="strand" evidence="3">
    <location>
        <begin position="105"/>
        <end position="107"/>
    </location>
</feature>
<reference key="1">
    <citation type="journal article" date="1998" name="Mol. Gen. Genet.">
        <title>Sequence comparison of the chromosomal regions encompassing the internalin C genes (inlC) of Listeria monocytogenes and L. ivanovii.</title>
        <authorList>
            <person name="Engelbrecht F."/>
            <person name="Dickneite C."/>
            <person name="Lampidis R."/>
            <person name="Goetz M."/>
            <person name="Dasgupta U."/>
            <person name="Goebel W."/>
        </authorList>
    </citation>
    <scope>NUCLEOTIDE SEQUENCE [GENOMIC DNA]</scope>
    <source>
        <strain>EGD / Serovar 1/2a</strain>
    </source>
</reference>
<reference key="2">
    <citation type="journal article" date="2001" name="Science">
        <title>Comparative genomics of Listeria species.</title>
        <authorList>
            <person name="Glaser P."/>
            <person name="Frangeul L."/>
            <person name="Buchrieser C."/>
            <person name="Rusniok C."/>
            <person name="Amend A."/>
            <person name="Baquero F."/>
            <person name="Berche P."/>
            <person name="Bloecker H."/>
            <person name="Brandt P."/>
            <person name="Chakraborty T."/>
            <person name="Charbit A."/>
            <person name="Chetouani F."/>
            <person name="Couve E."/>
            <person name="de Daruvar A."/>
            <person name="Dehoux P."/>
            <person name="Domann E."/>
            <person name="Dominguez-Bernal G."/>
            <person name="Duchaud E."/>
            <person name="Durant L."/>
            <person name="Dussurget O."/>
            <person name="Entian K.-D."/>
            <person name="Fsihi H."/>
            <person name="Garcia-del Portillo F."/>
            <person name="Garrido P."/>
            <person name="Gautier L."/>
            <person name="Goebel W."/>
            <person name="Gomez-Lopez N."/>
            <person name="Hain T."/>
            <person name="Hauf J."/>
            <person name="Jackson D."/>
            <person name="Jones L.-M."/>
            <person name="Kaerst U."/>
            <person name="Kreft J."/>
            <person name="Kuhn M."/>
            <person name="Kunst F."/>
            <person name="Kurapkat G."/>
            <person name="Madueno E."/>
            <person name="Maitournam A."/>
            <person name="Mata Vicente J."/>
            <person name="Ng E."/>
            <person name="Nedjari H."/>
            <person name="Nordsiek G."/>
            <person name="Novella S."/>
            <person name="de Pablos B."/>
            <person name="Perez-Diaz J.-C."/>
            <person name="Purcell R."/>
            <person name="Remmel B."/>
            <person name="Rose M."/>
            <person name="Schlueter T."/>
            <person name="Simoes N."/>
            <person name="Tierrez A."/>
            <person name="Vazquez-Boland J.-A."/>
            <person name="Voss H."/>
            <person name="Wehland J."/>
            <person name="Cossart P."/>
        </authorList>
    </citation>
    <scope>NUCLEOTIDE SEQUENCE [LARGE SCALE GENOMIC DNA]</scope>
    <source>
        <strain>ATCC BAA-679 / EGD-e</strain>
    </source>
</reference>
<protein>
    <recommendedName>
        <fullName evidence="2">Large ribosomal subunit protein bL19</fullName>
    </recommendedName>
    <alternativeName>
        <fullName>50S ribosomal protein L19</fullName>
    </alternativeName>
</protein>
<dbReference type="EMBL" id="Y07640">
    <property type="protein sequence ID" value="CAA68924.1"/>
    <property type="molecule type" value="Genomic_DNA"/>
</dbReference>
<dbReference type="EMBL" id="AL591981">
    <property type="protein sequence ID" value="CAC99865.1"/>
    <property type="molecule type" value="Genomic_DNA"/>
</dbReference>
<dbReference type="PIR" id="AC1298">
    <property type="entry name" value="AC1298"/>
</dbReference>
<dbReference type="RefSeq" id="NP_465312.1">
    <property type="nucleotide sequence ID" value="NC_003210.1"/>
</dbReference>
<dbReference type="RefSeq" id="WP_003728425.1">
    <property type="nucleotide sequence ID" value="NZ_CP149495.1"/>
</dbReference>
<dbReference type="PDB" id="7NHN">
    <property type="method" value="EM"/>
    <property type="resolution" value="2.90 A"/>
    <property type="chains" value="S=1-114"/>
</dbReference>
<dbReference type="PDB" id="8A57">
    <property type="method" value="EM"/>
    <property type="resolution" value="2.30 A"/>
    <property type="chains" value="S=1-114"/>
</dbReference>
<dbReference type="PDB" id="8A5I">
    <property type="method" value="EM"/>
    <property type="resolution" value="2.30 A"/>
    <property type="chains" value="S=1-114"/>
</dbReference>
<dbReference type="PDB" id="8A63">
    <property type="method" value="EM"/>
    <property type="resolution" value="3.10 A"/>
    <property type="chains" value="S=1-114"/>
</dbReference>
<dbReference type="PDBsum" id="7NHN"/>
<dbReference type="PDBsum" id="8A57"/>
<dbReference type="PDBsum" id="8A5I"/>
<dbReference type="PDBsum" id="8A63"/>
<dbReference type="EMDB" id="EMD-12334"/>
<dbReference type="EMDB" id="EMD-15161"/>
<dbReference type="EMDB" id="EMD-15175"/>
<dbReference type="EMDB" id="EMD-15204"/>
<dbReference type="SMR" id="O53083"/>
<dbReference type="STRING" id="169963.gene:17594472"/>
<dbReference type="PaxDb" id="169963-lmo1787"/>
<dbReference type="EnsemblBacteria" id="CAC99865">
    <property type="protein sequence ID" value="CAC99865"/>
    <property type="gene ID" value="CAC99865"/>
</dbReference>
<dbReference type="GeneID" id="93239697"/>
<dbReference type="GeneID" id="985943"/>
<dbReference type="KEGG" id="lmo:lmo1787"/>
<dbReference type="PATRIC" id="fig|169963.11.peg.1831"/>
<dbReference type="eggNOG" id="COG0335">
    <property type="taxonomic scope" value="Bacteria"/>
</dbReference>
<dbReference type="HOGENOM" id="CLU_103507_2_1_9"/>
<dbReference type="OrthoDB" id="9803541at2"/>
<dbReference type="PhylomeDB" id="O53083"/>
<dbReference type="BioCyc" id="LMON169963:LMO1787-MONOMER"/>
<dbReference type="Proteomes" id="UP000000817">
    <property type="component" value="Chromosome"/>
</dbReference>
<dbReference type="GO" id="GO:0022625">
    <property type="term" value="C:cytosolic large ribosomal subunit"/>
    <property type="evidence" value="ECO:0000318"/>
    <property type="project" value="GO_Central"/>
</dbReference>
<dbReference type="GO" id="GO:0003735">
    <property type="term" value="F:structural constituent of ribosome"/>
    <property type="evidence" value="ECO:0000318"/>
    <property type="project" value="GO_Central"/>
</dbReference>
<dbReference type="GO" id="GO:0006412">
    <property type="term" value="P:translation"/>
    <property type="evidence" value="ECO:0007669"/>
    <property type="project" value="UniProtKB-UniRule"/>
</dbReference>
<dbReference type="FunFam" id="2.30.30.790:FF:000001">
    <property type="entry name" value="50S ribosomal protein L19"/>
    <property type="match status" value="1"/>
</dbReference>
<dbReference type="Gene3D" id="2.30.30.790">
    <property type="match status" value="1"/>
</dbReference>
<dbReference type="HAMAP" id="MF_00402">
    <property type="entry name" value="Ribosomal_bL19"/>
    <property type="match status" value="1"/>
</dbReference>
<dbReference type="InterPro" id="IPR001857">
    <property type="entry name" value="Ribosomal_bL19"/>
</dbReference>
<dbReference type="InterPro" id="IPR018257">
    <property type="entry name" value="Ribosomal_bL19_CS"/>
</dbReference>
<dbReference type="InterPro" id="IPR038657">
    <property type="entry name" value="Ribosomal_bL19_sf"/>
</dbReference>
<dbReference type="InterPro" id="IPR008991">
    <property type="entry name" value="Translation_prot_SH3-like_sf"/>
</dbReference>
<dbReference type="NCBIfam" id="TIGR01024">
    <property type="entry name" value="rplS_bact"/>
    <property type="match status" value="1"/>
</dbReference>
<dbReference type="PANTHER" id="PTHR15680:SF9">
    <property type="entry name" value="LARGE RIBOSOMAL SUBUNIT PROTEIN BL19M"/>
    <property type="match status" value="1"/>
</dbReference>
<dbReference type="PANTHER" id="PTHR15680">
    <property type="entry name" value="RIBOSOMAL PROTEIN L19"/>
    <property type="match status" value="1"/>
</dbReference>
<dbReference type="Pfam" id="PF01245">
    <property type="entry name" value="Ribosomal_L19"/>
    <property type="match status" value="1"/>
</dbReference>
<dbReference type="PIRSF" id="PIRSF002191">
    <property type="entry name" value="Ribosomal_L19"/>
    <property type="match status" value="1"/>
</dbReference>
<dbReference type="PRINTS" id="PR00061">
    <property type="entry name" value="RIBOSOMALL19"/>
</dbReference>
<dbReference type="SUPFAM" id="SSF50104">
    <property type="entry name" value="Translation proteins SH3-like domain"/>
    <property type="match status" value="1"/>
</dbReference>
<dbReference type="PROSITE" id="PS01015">
    <property type="entry name" value="RIBOSOMAL_L19"/>
    <property type="match status" value="1"/>
</dbReference>
<evidence type="ECO:0000250" key="1"/>
<evidence type="ECO:0000305" key="2"/>
<evidence type="ECO:0007829" key="3">
    <source>
        <dbReference type="PDB" id="8A57"/>
    </source>
</evidence>
<accession>O53083</accession>
<name>RL19_LISMO</name>